<dbReference type="EMBL" id="AB512493">
    <property type="protein sequence ID" value="BAI52982.1"/>
    <property type="molecule type" value="mRNA"/>
</dbReference>
<dbReference type="EMBL" id="AL731630">
    <property type="protein sequence ID" value="CAE02351.2"/>
    <property type="molecule type" value="Genomic_DNA"/>
</dbReference>
<dbReference type="EMBL" id="AP008210">
    <property type="protein sequence ID" value="BAF15227.1"/>
    <property type="molecule type" value="Genomic_DNA"/>
</dbReference>
<dbReference type="EMBL" id="AP014960">
    <property type="protein sequence ID" value="BAS90081.1"/>
    <property type="molecule type" value="Genomic_DNA"/>
</dbReference>
<dbReference type="EMBL" id="CM000141">
    <property type="protein sequence ID" value="EAZ31342.1"/>
    <property type="molecule type" value="Genomic_DNA"/>
</dbReference>
<dbReference type="EMBL" id="AK243311">
    <property type="protein sequence ID" value="BAH01532.1"/>
    <property type="molecule type" value="mRNA"/>
</dbReference>
<dbReference type="RefSeq" id="XP_015635255.1">
    <property type="nucleotide sequence ID" value="XM_015779769.1"/>
</dbReference>
<dbReference type="RefSeq" id="XP_015635256.1">
    <property type="nucleotide sequence ID" value="XM_015779770.1"/>
</dbReference>
<dbReference type="SMR" id="Q7XRS1"/>
<dbReference type="FunCoup" id="Q7XRS1">
    <property type="interactions" value="25"/>
</dbReference>
<dbReference type="PaxDb" id="39947-Q7XRS1"/>
<dbReference type="EnsemblPlants" id="Os04t0516200-01">
    <property type="protein sequence ID" value="Os04t0516200-01"/>
    <property type="gene ID" value="Os04g0516200"/>
</dbReference>
<dbReference type="Gramene" id="Os04t0516200-01">
    <property type="protein sequence ID" value="Os04t0516200-01"/>
    <property type="gene ID" value="Os04g0516200"/>
</dbReference>
<dbReference type="KEGG" id="dosa:Os04g0516200"/>
<dbReference type="eggNOG" id="ENOG502QT0B">
    <property type="taxonomic scope" value="Eukaryota"/>
</dbReference>
<dbReference type="HOGENOM" id="CLU_071168_0_2_1"/>
<dbReference type="InParanoid" id="Q7XRS1"/>
<dbReference type="OMA" id="PWIPAET"/>
<dbReference type="OrthoDB" id="1906822at2759"/>
<dbReference type="Proteomes" id="UP000000763">
    <property type="component" value="Chromosome 4"/>
</dbReference>
<dbReference type="Proteomes" id="UP000007752">
    <property type="component" value="Chromosome 4"/>
</dbReference>
<dbReference type="Proteomes" id="UP000059680">
    <property type="component" value="Chromosome 4"/>
</dbReference>
<dbReference type="GO" id="GO:0005634">
    <property type="term" value="C:nucleus"/>
    <property type="evidence" value="ECO:0000250"/>
    <property type="project" value="UniProtKB"/>
</dbReference>
<dbReference type="GO" id="GO:0003677">
    <property type="term" value="F:DNA binding"/>
    <property type="evidence" value="ECO:0007669"/>
    <property type="project" value="UniProtKB-KW"/>
</dbReference>
<dbReference type="GO" id="GO:0009299">
    <property type="term" value="P:mRNA transcription"/>
    <property type="evidence" value="ECO:0000250"/>
    <property type="project" value="UniProtKB"/>
</dbReference>
<dbReference type="GO" id="GO:0090698">
    <property type="term" value="P:post-embryonic plant morphogenesis"/>
    <property type="evidence" value="ECO:0000250"/>
    <property type="project" value="UniProtKB"/>
</dbReference>
<dbReference type="GO" id="GO:0009416">
    <property type="term" value="P:response to light stimulus"/>
    <property type="evidence" value="ECO:0000318"/>
    <property type="project" value="GO_Central"/>
</dbReference>
<dbReference type="InterPro" id="IPR040222">
    <property type="entry name" value="ALOG"/>
</dbReference>
<dbReference type="InterPro" id="IPR006936">
    <property type="entry name" value="ALOG_dom"/>
</dbReference>
<dbReference type="PANTHER" id="PTHR31165">
    <property type="entry name" value="PROTEIN G1-LIKE2"/>
    <property type="match status" value="1"/>
</dbReference>
<dbReference type="PANTHER" id="PTHR31165:SF43">
    <property type="entry name" value="PROTEIN G1-LIKE3"/>
    <property type="match status" value="1"/>
</dbReference>
<dbReference type="Pfam" id="PF04852">
    <property type="entry name" value="ALOG_dom"/>
    <property type="match status" value="1"/>
</dbReference>
<dbReference type="PROSITE" id="PS51697">
    <property type="entry name" value="ALOG"/>
    <property type="match status" value="1"/>
</dbReference>
<protein>
    <recommendedName>
        <fullName>Protein G1-like4</fullName>
    </recommendedName>
</protein>
<feature type="chain" id="PRO_0000425305" description="Protein G1-like4">
    <location>
        <begin position="1"/>
        <end position="202"/>
    </location>
</feature>
<feature type="domain" description="ALOG" evidence="2">
    <location>
        <begin position="41"/>
        <end position="168"/>
    </location>
</feature>
<feature type="region of interest" description="Disordered" evidence="3">
    <location>
        <begin position="1"/>
        <end position="44"/>
    </location>
</feature>
<feature type="region of interest" description="Disordered" evidence="3">
    <location>
        <begin position="158"/>
        <end position="202"/>
    </location>
</feature>
<feature type="short sequence motif" description="Nuclear localization signal" evidence="1">
    <location>
        <begin position="166"/>
        <end position="170"/>
    </location>
</feature>
<feature type="compositionally biased region" description="Gly residues" evidence="3">
    <location>
        <begin position="12"/>
        <end position="22"/>
    </location>
</feature>
<feature type="compositionally biased region" description="Low complexity" evidence="3">
    <location>
        <begin position="23"/>
        <end position="36"/>
    </location>
</feature>
<feature type="compositionally biased region" description="Low complexity" evidence="3">
    <location>
        <begin position="173"/>
        <end position="186"/>
    </location>
</feature>
<feature type="compositionally biased region" description="Pro residues" evidence="3">
    <location>
        <begin position="192"/>
        <end position="202"/>
    </location>
</feature>
<feature type="sequence conflict" description="In Ref. 6; EAZ31342." evidence="4" ref="6">
    <original>A</original>
    <variation>P</variation>
    <location>
        <position position="33"/>
    </location>
</feature>
<comment type="function">
    <text evidence="1">Probable transcription regulator that acts as a developmental regulator by promoting cell growth in response to light.</text>
</comment>
<comment type="subcellular location">
    <subcellularLocation>
        <location evidence="1">Nucleus</location>
    </subcellularLocation>
</comment>
<comment type="similarity">
    <text evidence="4">Belongs to the plant homeotic and developmental regulators ALOG protein family.</text>
</comment>
<gene>
    <name type="primary">G1L4</name>
    <name type="ordered locus">Os04g0516200</name>
    <name type="ordered locus">LOC_Os04g43580</name>
    <name type="ORF">OsJ_15463</name>
    <name type="ORF">OSJNBb0072M01.12</name>
</gene>
<proteinExistence type="evidence at protein level"/>
<sequence>MDLSPNPDSPPSGGGNGGGGGSSSSNSSPSMGAGAPQSPSRYEAQKRRDWNTFGQYLRNHRPPLSLAQCSGAHVLEFLRYLDQFGKTKVHTAACPFFGHPSPPAPCPCPLRQAWGSLDALVGRLRAAFEENGGRPESNPFAARAVRLYLREVREHQARARGVSYEKKKRKKPQQQQLQGGDSSGLHGHQHHPPPPPPAGAAC</sequence>
<accession>Q7XRS1</accession>
<accession>A0A0N7KJD1</accession>
<accession>A3AVK3</accession>
<organism>
    <name type="scientific">Oryza sativa subsp. japonica</name>
    <name type="common">Rice</name>
    <dbReference type="NCBI Taxonomy" id="39947"/>
    <lineage>
        <taxon>Eukaryota</taxon>
        <taxon>Viridiplantae</taxon>
        <taxon>Streptophyta</taxon>
        <taxon>Embryophyta</taxon>
        <taxon>Tracheophyta</taxon>
        <taxon>Spermatophyta</taxon>
        <taxon>Magnoliopsida</taxon>
        <taxon>Liliopsida</taxon>
        <taxon>Poales</taxon>
        <taxon>Poaceae</taxon>
        <taxon>BOP clade</taxon>
        <taxon>Oryzoideae</taxon>
        <taxon>Oryzeae</taxon>
        <taxon>Oryzinae</taxon>
        <taxon>Oryza</taxon>
        <taxon>Oryza sativa</taxon>
    </lineage>
</organism>
<evidence type="ECO:0000250" key="1"/>
<evidence type="ECO:0000255" key="2">
    <source>
        <dbReference type="PROSITE-ProRule" id="PRU01033"/>
    </source>
</evidence>
<evidence type="ECO:0000256" key="3">
    <source>
        <dbReference type="SAM" id="MobiDB-lite"/>
    </source>
</evidence>
<evidence type="ECO:0000305" key="4"/>
<keyword id="KW-0217">Developmental protein</keyword>
<keyword id="KW-0238">DNA-binding</keyword>
<keyword id="KW-0539">Nucleus</keyword>
<keyword id="KW-1185">Reference proteome</keyword>
<keyword id="KW-0804">Transcription</keyword>
<keyword id="KW-0805">Transcription regulation</keyword>
<reference key="1">
    <citation type="journal article" date="2009" name="Proc. Natl. Acad. Sci. U.S.A.">
        <title>The homeotic gene long sterile lemma (G1) specifies sterile lemma identity in the rice spikelet.</title>
        <authorList>
            <person name="Yoshida A."/>
            <person name="Suzaki Y."/>
            <person name="Tanaka W."/>
            <person name="Hirano H.-Y."/>
        </authorList>
    </citation>
    <scope>NUCLEOTIDE SEQUENCE [MRNA]</scope>
    <scope>GENE FAMILY</scope>
    <scope>NOMENCLATURE</scope>
    <source>
        <strain>cv. Nipponbare</strain>
    </source>
</reference>
<reference key="2">
    <citation type="journal article" date="2002" name="Nature">
        <title>Sequence and analysis of rice chromosome 4.</title>
        <authorList>
            <person name="Feng Q."/>
            <person name="Zhang Y."/>
            <person name="Hao P."/>
            <person name="Wang S."/>
            <person name="Fu G."/>
            <person name="Huang Y."/>
            <person name="Li Y."/>
            <person name="Zhu J."/>
            <person name="Liu Y."/>
            <person name="Hu X."/>
            <person name="Jia P."/>
            <person name="Zhang Y."/>
            <person name="Zhao Q."/>
            <person name="Ying K."/>
            <person name="Yu S."/>
            <person name="Tang Y."/>
            <person name="Weng Q."/>
            <person name="Zhang L."/>
            <person name="Lu Y."/>
            <person name="Mu J."/>
            <person name="Lu Y."/>
            <person name="Zhang L.S."/>
            <person name="Yu Z."/>
            <person name="Fan D."/>
            <person name="Liu X."/>
            <person name="Lu T."/>
            <person name="Li C."/>
            <person name="Wu Y."/>
            <person name="Sun T."/>
            <person name="Lei H."/>
            <person name="Li T."/>
            <person name="Hu H."/>
            <person name="Guan J."/>
            <person name="Wu M."/>
            <person name="Zhang R."/>
            <person name="Zhou B."/>
            <person name="Chen Z."/>
            <person name="Chen L."/>
            <person name="Jin Z."/>
            <person name="Wang R."/>
            <person name="Yin H."/>
            <person name="Cai Z."/>
            <person name="Ren S."/>
            <person name="Lv G."/>
            <person name="Gu W."/>
            <person name="Zhu G."/>
            <person name="Tu Y."/>
            <person name="Jia J."/>
            <person name="Zhang Y."/>
            <person name="Chen J."/>
            <person name="Kang H."/>
            <person name="Chen X."/>
            <person name="Shao C."/>
            <person name="Sun Y."/>
            <person name="Hu Q."/>
            <person name="Zhang X."/>
            <person name="Zhang W."/>
            <person name="Wang L."/>
            <person name="Ding C."/>
            <person name="Sheng H."/>
            <person name="Gu J."/>
            <person name="Chen S."/>
            <person name="Ni L."/>
            <person name="Zhu F."/>
            <person name="Chen W."/>
            <person name="Lan L."/>
            <person name="Lai Y."/>
            <person name="Cheng Z."/>
            <person name="Gu M."/>
            <person name="Jiang J."/>
            <person name="Li J."/>
            <person name="Hong G."/>
            <person name="Xue Y."/>
            <person name="Han B."/>
        </authorList>
    </citation>
    <scope>NUCLEOTIDE SEQUENCE [LARGE SCALE GENOMIC DNA]</scope>
    <source>
        <strain>cv. Nipponbare</strain>
    </source>
</reference>
<reference key="3">
    <citation type="journal article" date="2005" name="Nature">
        <title>The map-based sequence of the rice genome.</title>
        <authorList>
            <consortium name="International rice genome sequencing project (IRGSP)"/>
        </authorList>
    </citation>
    <scope>NUCLEOTIDE SEQUENCE [LARGE SCALE GENOMIC DNA]</scope>
    <source>
        <strain>cv. Nipponbare</strain>
    </source>
</reference>
<reference key="4">
    <citation type="journal article" date="2008" name="Nucleic Acids Res.">
        <title>The rice annotation project database (RAP-DB): 2008 update.</title>
        <authorList>
            <consortium name="The rice annotation project (RAP)"/>
        </authorList>
    </citation>
    <scope>GENOME REANNOTATION</scope>
    <source>
        <strain>cv. Nipponbare</strain>
    </source>
</reference>
<reference key="5">
    <citation type="journal article" date="2013" name="Rice">
        <title>Improvement of the Oryza sativa Nipponbare reference genome using next generation sequence and optical map data.</title>
        <authorList>
            <person name="Kawahara Y."/>
            <person name="de la Bastide M."/>
            <person name="Hamilton J.P."/>
            <person name="Kanamori H."/>
            <person name="McCombie W.R."/>
            <person name="Ouyang S."/>
            <person name="Schwartz D.C."/>
            <person name="Tanaka T."/>
            <person name="Wu J."/>
            <person name="Zhou S."/>
            <person name="Childs K.L."/>
            <person name="Davidson R.M."/>
            <person name="Lin H."/>
            <person name="Quesada-Ocampo L."/>
            <person name="Vaillancourt B."/>
            <person name="Sakai H."/>
            <person name="Lee S.S."/>
            <person name="Kim J."/>
            <person name="Numa H."/>
            <person name="Itoh T."/>
            <person name="Buell C.R."/>
            <person name="Matsumoto T."/>
        </authorList>
    </citation>
    <scope>GENOME REANNOTATION</scope>
    <source>
        <strain>cv. Nipponbare</strain>
    </source>
</reference>
<reference key="6">
    <citation type="journal article" date="2005" name="PLoS Biol.">
        <title>The genomes of Oryza sativa: a history of duplications.</title>
        <authorList>
            <person name="Yu J."/>
            <person name="Wang J."/>
            <person name="Lin W."/>
            <person name="Li S."/>
            <person name="Li H."/>
            <person name="Zhou J."/>
            <person name="Ni P."/>
            <person name="Dong W."/>
            <person name="Hu S."/>
            <person name="Zeng C."/>
            <person name="Zhang J."/>
            <person name="Zhang Y."/>
            <person name="Li R."/>
            <person name="Xu Z."/>
            <person name="Li S."/>
            <person name="Li X."/>
            <person name="Zheng H."/>
            <person name="Cong L."/>
            <person name="Lin L."/>
            <person name="Yin J."/>
            <person name="Geng J."/>
            <person name="Li G."/>
            <person name="Shi J."/>
            <person name="Liu J."/>
            <person name="Lv H."/>
            <person name="Li J."/>
            <person name="Wang J."/>
            <person name="Deng Y."/>
            <person name="Ran L."/>
            <person name="Shi X."/>
            <person name="Wang X."/>
            <person name="Wu Q."/>
            <person name="Li C."/>
            <person name="Ren X."/>
            <person name="Wang J."/>
            <person name="Wang X."/>
            <person name="Li D."/>
            <person name="Liu D."/>
            <person name="Zhang X."/>
            <person name="Ji Z."/>
            <person name="Zhao W."/>
            <person name="Sun Y."/>
            <person name="Zhang Z."/>
            <person name="Bao J."/>
            <person name="Han Y."/>
            <person name="Dong L."/>
            <person name="Ji J."/>
            <person name="Chen P."/>
            <person name="Wu S."/>
            <person name="Liu J."/>
            <person name="Xiao Y."/>
            <person name="Bu D."/>
            <person name="Tan J."/>
            <person name="Yang L."/>
            <person name="Ye C."/>
            <person name="Zhang J."/>
            <person name="Xu J."/>
            <person name="Zhou Y."/>
            <person name="Yu Y."/>
            <person name="Zhang B."/>
            <person name="Zhuang S."/>
            <person name="Wei H."/>
            <person name="Liu B."/>
            <person name="Lei M."/>
            <person name="Yu H."/>
            <person name="Li Y."/>
            <person name="Xu H."/>
            <person name="Wei S."/>
            <person name="He X."/>
            <person name="Fang L."/>
            <person name="Zhang Z."/>
            <person name="Zhang Y."/>
            <person name="Huang X."/>
            <person name="Su Z."/>
            <person name="Tong W."/>
            <person name="Li J."/>
            <person name="Tong Z."/>
            <person name="Li S."/>
            <person name="Ye J."/>
            <person name="Wang L."/>
            <person name="Fang L."/>
            <person name="Lei T."/>
            <person name="Chen C.-S."/>
            <person name="Chen H.-C."/>
            <person name="Xu Z."/>
            <person name="Li H."/>
            <person name="Huang H."/>
            <person name="Zhang F."/>
            <person name="Xu H."/>
            <person name="Li N."/>
            <person name="Zhao C."/>
            <person name="Li S."/>
            <person name="Dong L."/>
            <person name="Huang Y."/>
            <person name="Li L."/>
            <person name="Xi Y."/>
            <person name="Qi Q."/>
            <person name="Li W."/>
            <person name="Zhang B."/>
            <person name="Hu W."/>
            <person name="Zhang Y."/>
            <person name="Tian X."/>
            <person name="Jiao Y."/>
            <person name="Liang X."/>
            <person name="Jin J."/>
            <person name="Gao L."/>
            <person name="Zheng W."/>
            <person name="Hao B."/>
            <person name="Liu S.-M."/>
            <person name="Wang W."/>
            <person name="Yuan L."/>
            <person name="Cao M."/>
            <person name="McDermott J."/>
            <person name="Samudrala R."/>
            <person name="Wang J."/>
            <person name="Wong G.K.-S."/>
            <person name="Yang H."/>
        </authorList>
    </citation>
    <scope>NUCLEOTIDE SEQUENCE [LARGE SCALE GENOMIC DNA]</scope>
    <source>
        <strain>cv. Nipponbare</strain>
    </source>
</reference>
<reference key="7">
    <citation type="submission" date="2006-10" db="EMBL/GenBank/DDBJ databases">
        <title>Oryza sativa full length cDNA.</title>
        <authorList>
            <consortium name="The rice full-length cDNA consortium"/>
        </authorList>
    </citation>
    <scope>NUCLEOTIDE SEQUENCE [LARGE SCALE MRNA]</scope>
    <source>
        <strain>cv. Nipponbare</strain>
        <tissue>Root</tissue>
        <tissue>Seedling</tissue>
    </source>
</reference>
<reference key="8">
    <citation type="journal article" date="2012" name="Biol. Direct">
        <title>ALOG domains: provenance of plant homeotic and developmental regulators from the DNA-binding domain of a novel class of DIRS1-type retroposons.</title>
        <authorList>
            <person name="Iyer L.M."/>
            <person name="Aravind L."/>
        </authorList>
    </citation>
    <scope>DNA-BINDING</scope>
    <scope>GENE FAMILY</scope>
</reference>
<name>G1L4_ORYSJ</name>